<keyword id="KW-0408">Iron</keyword>
<keyword id="KW-0411">Iron-sulfur</keyword>
<keyword id="KW-0456">Lyase</keyword>
<keyword id="KW-0479">Metal-binding</keyword>
<keyword id="KW-0694">RNA-binding</keyword>
<keyword id="KW-0816">Tricarboxylic acid cycle</keyword>
<feature type="chain" id="PRO_0000076669" description="Aconitate hydratase A">
    <location>
        <begin position="1"/>
        <end position="901"/>
    </location>
</feature>
<feature type="binding site" evidence="2">
    <location>
        <position position="443"/>
    </location>
    <ligand>
        <name>[4Fe-4S] cluster</name>
        <dbReference type="ChEBI" id="CHEBI:49883"/>
    </ligand>
</feature>
<feature type="binding site" evidence="2">
    <location>
        <position position="509"/>
    </location>
    <ligand>
        <name>[4Fe-4S] cluster</name>
        <dbReference type="ChEBI" id="CHEBI:49883"/>
    </ligand>
</feature>
<feature type="binding site" evidence="2">
    <location>
        <position position="512"/>
    </location>
    <ligand>
        <name>[4Fe-4S] cluster</name>
        <dbReference type="ChEBI" id="CHEBI:49883"/>
    </ligand>
</feature>
<name>ACNA_STAAR</name>
<organism>
    <name type="scientific">Staphylococcus aureus (strain MRSA252)</name>
    <dbReference type="NCBI Taxonomy" id="282458"/>
    <lineage>
        <taxon>Bacteria</taxon>
        <taxon>Bacillati</taxon>
        <taxon>Bacillota</taxon>
        <taxon>Bacilli</taxon>
        <taxon>Bacillales</taxon>
        <taxon>Staphylococcaceae</taxon>
        <taxon>Staphylococcus</taxon>
    </lineage>
</organism>
<reference key="1">
    <citation type="journal article" date="2004" name="Proc. Natl. Acad. Sci. U.S.A.">
        <title>Complete genomes of two clinical Staphylococcus aureus strains: evidence for the rapid evolution of virulence and drug resistance.</title>
        <authorList>
            <person name="Holden M.T.G."/>
            <person name="Feil E.J."/>
            <person name="Lindsay J.A."/>
            <person name="Peacock S.J."/>
            <person name="Day N.P.J."/>
            <person name="Enright M.C."/>
            <person name="Foster T.J."/>
            <person name="Moore C.E."/>
            <person name="Hurst L."/>
            <person name="Atkin R."/>
            <person name="Barron A."/>
            <person name="Bason N."/>
            <person name="Bentley S.D."/>
            <person name="Chillingworth C."/>
            <person name="Chillingworth T."/>
            <person name="Churcher C."/>
            <person name="Clark L."/>
            <person name="Corton C."/>
            <person name="Cronin A."/>
            <person name="Doggett J."/>
            <person name="Dowd L."/>
            <person name="Feltwell T."/>
            <person name="Hance Z."/>
            <person name="Harris B."/>
            <person name="Hauser H."/>
            <person name="Holroyd S."/>
            <person name="Jagels K."/>
            <person name="James K.D."/>
            <person name="Lennard N."/>
            <person name="Line A."/>
            <person name="Mayes R."/>
            <person name="Moule S."/>
            <person name="Mungall K."/>
            <person name="Ormond D."/>
            <person name="Quail M.A."/>
            <person name="Rabbinowitsch E."/>
            <person name="Rutherford K.M."/>
            <person name="Sanders M."/>
            <person name="Sharp S."/>
            <person name="Simmonds M."/>
            <person name="Stevens K."/>
            <person name="Whitehead S."/>
            <person name="Barrell B.G."/>
            <person name="Spratt B.G."/>
            <person name="Parkhill J."/>
        </authorList>
    </citation>
    <scope>NUCLEOTIDE SEQUENCE [LARGE SCALE GENOMIC DNA]</scope>
    <source>
        <strain>MRSA252</strain>
    </source>
</reference>
<evidence type="ECO:0000250" key="1">
    <source>
        <dbReference type="UniProtKB" id="P09339"/>
    </source>
</evidence>
<evidence type="ECO:0000250" key="2">
    <source>
        <dbReference type="UniProtKB" id="P36683"/>
    </source>
</evidence>
<evidence type="ECO:0000250" key="3">
    <source>
        <dbReference type="UniProtKB" id="Q8ZP52"/>
    </source>
</evidence>
<evidence type="ECO:0000305" key="4"/>
<sequence length="901" mass="98912">MAANFKEQSKKHFDLNGQSYTYYDLKAVEEQGITKVSKLPYSIRVLLESLLRQEDDFVITDDHIKALSQFGKDGNEGEVPFKPSRVILQDFTGVPAVVDLASLRKAMDDVGGDITKINPEVPVDLVIDHSVQVDSYANPEALERNMKLEFERNYERYQFLNWATKAFDNYNAVPPATGIVHQVNLEYLASVVHVRDVDGEKTAFPDTLVGTDSHTTMINGIGVLGWGVGGIEAEAGMLGQPSYFPIPEVIGVRLVNSLPQGATATDLALRVTQELRKKGVVGKFVEFFGPGVQHLPLADRATIANMAPEYGATCGFFPVDDESLKYMKLTGRSDEHIALVKEYLKQNHMFFDVEKEDPNYTDVIELDLSTVEASLSGPKRPQDLIFLSDMKSSFENSVTAPAGNQGHGLDKSEFDKKAEINFKDGSKATMKTGDIAIAAITSCTNTSNPYVMLGAGLVAKKAVEKGLKVPEYVKTSLAPGSKVVTGYLRGAGLQPYLDDLGFNLVGYGCTTCIGNSGPLLPEIEKAIADEDLLVTSVLSGNRNFEGRIHPLVKANYLASPQLVVAYALAGSVDIDLQNEPIGKGNDGEDVYLKDIWPSIKEVSDTVDSVVTPELFIEEYNNVYNNNELWNEIDVTDQPLYDFDPNSTYIQNPSFFQGLSKEPGTIVPLNGLRVMGKFGDSVTTDHISPAGAIGKDTPAGKYLQDHQVPIREFNSYGSRRGNHEVMVRGTFANIRIKNQLAPGTEGGFTTYWPTNEVMPIFDAAMKYKEDGTGLVVLAGNDYGMGSSRDWAAKGTNLLGVKTVIAQSYERIHRSNLVMMGVLPLEFKKGESADSLGLDGTEEISVNIDENVQPHDYVKVTAKKQDGDLVEFDAMVRFDSLVEMDYYRHGGILQMVLRNKLAQ</sequence>
<proteinExistence type="inferred from homology"/>
<protein>
    <recommendedName>
        <fullName evidence="3">Aconitate hydratase A</fullName>
        <shortName evidence="3">ACN</shortName>
        <shortName evidence="3">Aconitase</shortName>
        <ecNumber evidence="3">4.2.1.3</ecNumber>
    </recommendedName>
    <alternativeName>
        <fullName evidence="3">(2R,3S)-2-methylisocitrate dehydratase</fullName>
    </alternativeName>
    <alternativeName>
        <fullName evidence="3">(2S,3R)-3-hydroxybutane-1,2,3-tricarboxylate dehydratase</fullName>
    </alternativeName>
    <alternativeName>
        <fullName evidence="1">Iron-responsive protein-like</fullName>
        <shortName evidence="1">IRP-like</shortName>
    </alternativeName>
    <alternativeName>
        <fullName evidence="3">Probable 2-methyl-cis-aconitate hydratase</fullName>
        <ecNumber evidence="3">4.2.1.99</ecNumber>
    </alternativeName>
    <alternativeName>
        <fullName evidence="1">RNA-binding protein</fullName>
    </alternativeName>
</protein>
<comment type="function">
    <text evidence="1 3">Involved in the catabolism of short chain fatty acids (SCFA) via the tricarboxylic acid (TCA)(acetyl degradation route) and probably the 2-methylcitrate cycle I (propionate degradation route). Catalyzes the reversible isomerization of citrate to isocitrate via cis-aconitate. Could catalyze the hydration of 2-methyl-cis-aconitate to yield (2R,3S)-2-methylisocitrate. The apo form of AcnA functions as a RNA-binding regulatory protein.</text>
</comment>
<comment type="catalytic activity">
    <reaction evidence="3">
        <text>citrate = D-threo-isocitrate</text>
        <dbReference type="Rhea" id="RHEA:10336"/>
        <dbReference type="ChEBI" id="CHEBI:15562"/>
        <dbReference type="ChEBI" id="CHEBI:16947"/>
        <dbReference type="EC" id="4.2.1.3"/>
    </reaction>
</comment>
<comment type="catalytic activity">
    <reaction evidence="3">
        <text>(2S,3R)-3-hydroxybutane-1,2,3-tricarboxylate = 2-methyl-cis-aconitate + H2O</text>
        <dbReference type="Rhea" id="RHEA:17941"/>
        <dbReference type="ChEBI" id="CHEBI:15377"/>
        <dbReference type="ChEBI" id="CHEBI:57429"/>
        <dbReference type="ChEBI" id="CHEBI:57872"/>
        <dbReference type="EC" id="4.2.1.99"/>
    </reaction>
</comment>
<comment type="cofactor">
    <cofactor evidence="1">
        <name>[4Fe-4S] cluster</name>
        <dbReference type="ChEBI" id="CHEBI:49883"/>
    </cofactor>
    <text evidence="1">Binds 1 [4Fe-4S] cluster per subunit.</text>
</comment>
<comment type="pathway">
    <text evidence="3">Carbohydrate metabolism; tricarboxylic acid cycle; isocitrate from oxaloacetate: step 2/2.</text>
</comment>
<comment type="pathway">
    <text evidence="3">Organic acid metabolism; propanoate degradation.</text>
</comment>
<comment type="subunit">
    <text evidence="1">Monomer.</text>
</comment>
<comment type="similarity">
    <text evidence="4">Belongs to the aconitase/IPM isomerase family.</text>
</comment>
<dbReference type="EC" id="4.2.1.3" evidence="3"/>
<dbReference type="EC" id="4.2.1.99" evidence="3"/>
<dbReference type="EMBL" id="BX571856">
    <property type="protein sequence ID" value="CAG40360.1"/>
    <property type="molecule type" value="Genomic_DNA"/>
</dbReference>
<dbReference type="RefSeq" id="WP_000729730.1">
    <property type="nucleotide sequence ID" value="NC_002952.2"/>
</dbReference>
<dbReference type="SMR" id="Q6GH55"/>
<dbReference type="KEGG" id="sar:SAR1362"/>
<dbReference type="HOGENOM" id="CLU_013476_2_1_9"/>
<dbReference type="UniPathway" id="UPA00223">
    <property type="reaction ID" value="UER00718"/>
</dbReference>
<dbReference type="UniPathway" id="UPA00946"/>
<dbReference type="Proteomes" id="UP000000596">
    <property type="component" value="Chromosome"/>
</dbReference>
<dbReference type="GO" id="GO:0047456">
    <property type="term" value="F:2-methylisocitrate dehydratase activity"/>
    <property type="evidence" value="ECO:0000250"/>
    <property type="project" value="UniProtKB"/>
</dbReference>
<dbReference type="GO" id="GO:0051539">
    <property type="term" value="F:4 iron, 4 sulfur cluster binding"/>
    <property type="evidence" value="ECO:0000250"/>
    <property type="project" value="UniProtKB"/>
</dbReference>
<dbReference type="GO" id="GO:0003994">
    <property type="term" value="F:aconitate hydratase activity"/>
    <property type="evidence" value="ECO:0000250"/>
    <property type="project" value="UniProtKB"/>
</dbReference>
<dbReference type="GO" id="GO:0046872">
    <property type="term" value="F:metal ion binding"/>
    <property type="evidence" value="ECO:0007669"/>
    <property type="project" value="UniProtKB-KW"/>
</dbReference>
<dbReference type="GO" id="GO:0003730">
    <property type="term" value="F:mRNA 3'-UTR binding"/>
    <property type="evidence" value="ECO:0000250"/>
    <property type="project" value="UniProtKB"/>
</dbReference>
<dbReference type="GO" id="GO:0003729">
    <property type="term" value="F:mRNA binding"/>
    <property type="evidence" value="ECO:0000250"/>
    <property type="project" value="UniProtKB"/>
</dbReference>
<dbReference type="GO" id="GO:0019679">
    <property type="term" value="P:propionate metabolic process, methylcitrate cycle"/>
    <property type="evidence" value="ECO:0000250"/>
    <property type="project" value="UniProtKB"/>
</dbReference>
<dbReference type="GO" id="GO:0006099">
    <property type="term" value="P:tricarboxylic acid cycle"/>
    <property type="evidence" value="ECO:0000250"/>
    <property type="project" value="UniProtKB"/>
</dbReference>
<dbReference type="CDD" id="cd01586">
    <property type="entry name" value="AcnA_IRP"/>
    <property type="match status" value="1"/>
</dbReference>
<dbReference type="CDD" id="cd01580">
    <property type="entry name" value="AcnA_IRP_Swivel"/>
    <property type="match status" value="1"/>
</dbReference>
<dbReference type="FunFam" id="3.20.19.10:FF:000001">
    <property type="entry name" value="Aconitate hydratase"/>
    <property type="match status" value="1"/>
</dbReference>
<dbReference type="FunFam" id="3.30.499.10:FF:000002">
    <property type="entry name" value="Aconitate hydratase"/>
    <property type="match status" value="1"/>
</dbReference>
<dbReference type="FunFam" id="3.30.499.10:FF:000005">
    <property type="entry name" value="cytoplasmic aconitate hydratase"/>
    <property type="match status" value="1"/>
</dbReference>
<dbReference type="Gene3D" id="6.10.190.10">
    <property type="match status" value="1"/>
</dbReference>
<dbReference type="Gene3D" id="3.30.499.10">
    <property type="entry name" value="Aconitase, domain 3"/>
    <property type="match status" value="2"/>
</dbReference>
<dbReference type="Gene3D" id="3.20.19.10">
    <property type="entry name" value="Aconitase, domain 4"/>
    <property type="match status" value="1"/>
</dbReference>
<dbReference type="InterPro" id="IPR044137">
    <property type="entry name" value="AcnA_IRP_Swivel"/>
</dbReference>
<dbReference type="InterPro" id="IPR015931">
    <property type="entry name" value="Acnase/IPM_dHydase_lsu_aba_1/3"/>
</dbReference>
<dbReference type="InterPro" id="IPR001030">
    <property type="entry name" value="Acoase/IPM_deHydtase_lsu_aba"/>
</dbReference>
<dbReference type="InterPro" id="IPR015928">
    <property type="entry name" value="Aconitase/3IPM_dehydase_swvl"/>
</dbReference>
<dbReference type="InterPro" id="IPR006249">
    <property type="entry name" value="Aconitase/IRP2"/>
</dbReference>
<dbReference type="InterPro" id="IPR018136">
    <property type="entry name" value="Aconitase_4Fe-4S_BS"/>
</dbReference>
<dbReference type="InterPro" id="IPR036008">
    <property type="entry name" value="Aconitase_4Fe-4S_dom"/>
</dbReference>
<dbReference type="InterPro" id="IPR000573">
    <property type="entry name" value="AconitaseA/IPMdHydase_ssu_swvl"/>
</dbReference>
<dbReference type="NCBIfam" id="TIGR01341">
    <property type="entry name" value="aconitase_1"/>
    <property type="match status" value="1"/>
</dbReference>
<dbReference type="NCBIfam" id="NF006757">
    <property type="entry name" value="PRK09277.1"/>
    <property type="match status" value="1"/>
</dbReference>
<dbReference type="NCBIfam" id="NF009520">
    <property type="entry name" value="PRK12881.1"/>
    <property type="match status" value="1"/>
</dbReference>
<dbReference type="PANTHER" id="PTHR11670">
    <property type="entry name" value="ACONITASE/IRON-RESPONSIVE ELEMENT FAMILY MEMBER"/>
    <property type="match status" value="1"/>
</dbReference>
<dbReference type="Pfam" id="PF00330">
    <property type="entry name" value="Aconitase"/>
    <property type="match status" value="1"/>
</dbReference>
<dbReference type="Pfam" id="PF00694">
    <property type="entry name" value="Aconitase_C"/>
    <property type="match status" value="1"/>
</dbReference>
<dbReference type="PRINTS" id="PR00415">
    <property type="entry name" value="ACONITASE"/>
</dbReference>
<dbReference type="SUPFAM" id="SSF53732">
    <property type="entry name" value="Aconitase iron-sulfur domain"/>
    <property type="match status" value="1"/>
</dbReference>
<dbReference type="SUPFAM" id="SSF52016">
    <property type="entry name" value="LeuD/IlvD-like"/>
    <property type="match status" value="1"/>
</dbReference>
<dbReference type="PROSITE" id="PS00450">
    <property type="entry name" value="ACONITASE_1"/>
    <property type="match status" value="1"/>
</dbReference>
<dbReference type="PROSITE" id="PS01244">
    <property type="entry name" value="ACONITASE_2"/>
    <property type="match status" value="1"/>
</dbReference>
<accession>Q6GH55</accession>
<gene>
    <name type="primary">acnA</name>
    <name type="synonym">citB</name>
    <name type="ordered locus">SAR1362</name>
</gene>